<dbReference type="EC" id="3.1.1.31"/>
<dbReference type="EMBL" id="AJ279003">
    <property type="protein sequence ID" value="CAC14909.1"/>
    <property type="molecule type" value="Genomic_DNA"/>
</dbReference>
<dbReference type="SMR" id="Q9EV79"/>
<dbReference type="REPRODUCTION-2DPAGE" id="Q9EV79"/>
<dbReference type="UniPathway" id="UPA00115">
    <property type="reaction ID" value="UER00409"/>
</dbReference>
<dbReference type="GO" id="GO:0017057">
    <property type="term" value="F:6-phosphogluconolactonase activity"/>
    <property type="evidence" value="ECO:0007669"/>
    <property type="project" value="UniProtKB-EC"/>
</dbReference>
<dbReference type="GO" id="GO:0005975">
    <property type="term" value="P:carbohydrate metabolic process"/>
    <property type="evidence" value="ECO:0007669"/>
    <property type="project" value="InterPro"/>
</dbReference>
<dbReference type="GO" id="GO:0006098">
    <property type="term" value="P:pentose-phosphate shunt"/>
    <property type="evidence" value="ECO:0007669"/>
    <property type="project" value="UniProtKB-UniPathway"/>
</dbReference>
<dbReference type="CDD" id="cd01400">
    <property type="entry name" value="6PGL"/>
    <property type="match status" value="1"/>
</dbReference>
<dbReference type="Gene3D" id="3.40.50.1360">
    <property type="match status" value="1"/>
</dbReference>
<dbReference type="InterPro" id="IPR005900">
    <property type="entry name" value="6-phosphogluconolactonase_DevB"/>
</dbReference>
<dbReference type="InterPro" id="IPR006148">
    <property type="entry name" value="Glc/Gal-6P_isomerase"/>
</dbReference>
<dbReference type="InterPro" id="IPR037171">
    <property type="entry name" value="NagB/RpiA_transferase-like"/>
</dbReference>
<dbReference type="InterPro" id="IPR039104">
    <property type="entry name" value="PGLS"/>
</dbReference>
<dbReference type="NCBIfam" id="TIGR01198">
    <property type="entry name" value="pgl"/>
    <property type="match status" value="1"/>
</dbReference>
<dbReference type="PANTHER" id="PTHR11054">
    <property type="entry name" value="6-PHOSPHOGLUCONOLACTONASE"/>
    <property type="match status" value="1"/>
</dbReference>
<dbReference type="PANTHER" id="PTHR11054:SF0">
    <property type="entry name" value="6-PHOSPHOGLUCONOLACTONASE"/>
    <property type="match status" value="1"/>
</dbReference>
<dbReference type="Pfam" id="PF01182">
    <property type="entry name" value="Glucosamine_iso"/>
    <property type="match status" value="1"/>
</dbReference>
<dbReference type="SUPFAM" id="SSF100950">
    <property type="entry name" value="NagB/RpiA/CoA transferase-like"/>
    <property type="match status" value="1"/>
</dbReference>
<protein>
    <recommendedName>
        <fullName>6-phosphogluconolactonase</fullName>
        <shortName>6PGL</shortName>
        <ecNumber>3.1.1.31</ecNumber>
    </recommendedName>
</protein>
<comment type="function">
    <text>Hydrolysis of 6-phosphogluconolactone to 6-phosphogluconate.</text>
</comment>
<comment type="catalytic activity">
    <reaction>
        <text>6-phospho-D-glucono-1,5-lactone + H2O = 6-phospho-D-gluconate + H(+)</text>
        <dbReference type="Rhea" id="RHEA:12556"/>
        <dbReference type="ChEBI" id="CHEBI:15377"/>
        <dbReference type="ChEBI" id="CHEBI:15378"/>
        <dbReference type="ChEBI" id="CHEBI:57955"/>
        <dbReference type="ChEBI" id="CHEBI:58759"/>
        <dbReference type="EC" id="3.1.1.31"/>
    </reaction>
</comment>
<comment type="pathway">
    <text>Carbohydrate degradation; pentose phosphate pathway; D-ribulose 5-phosphate from D-glucose 6-phosphate (oxidative stage): step 2/3.</text>
</comment>
<comment type="similarity">
    <text evidence="1">Belongs to the glucosamine/galactosamine-6-phosphate isomerase family. 6-phosphogluconolactonase subfamily.</text>
</comment>
<keyword id="KW-0378">Hydrolase</keyword>
<reference key="1">
    <citation type="journal article" date="2002" name="FEMS Microbiol. Lett.">
        <title>Analysis of the zwf-pgl-eda-operon in Pseudomonas putida strains H and KT2440.</title>
        <authorList>
            <person name="Petruschka L."/>
            <person name="Adolf K."/>
            <person name="Burchhardt G."/>
            <person name="Dernedde J."/>
            <person name="Jurgensen J."/>
            <person name="Herrmann H."/>
        </authorList>
    </citation>
    <scope>NUCLEOTIDE SEQUENCE [GENOMIC DNA]</scope>
    <source>
        <strain>H</strain>
    </source>
</reference>
<proteinExistence type="inferred from homology"/>
<accession>Q9EV79</accession>
<gene>
    <name type="primary">pgl</name>
</gene>
<evidence type="ECO:0000305" key="1"/>
<name>6PGL_PSEPU</name>
<organism>
    <name type="scientific">Pseudomonas putida</name>
    <name type="common">Arthrobacter siderocapsulatus</name>
    <dbReference type="NCBI Taxonomy" id="303"/>
    <lineage>
        <taxon>Bacteria</taxon>
        <taxon>Pseudomonadati</taxon>
        <taxon>Pseudomonadota</taxon>
        <taxon>Gammaproteobacteria</taxon>
        <taxon>Pseudomonadales</taxon>
        <taxon>Pseudomonadaceae</taxon>
        <taxon>Pseudomonas</taxon>
    </lineage>
</organism>
<feature type="chain" id="PRO_0000090103" description="6-phosphogluconolactonase">
    <location>
        <begin position="1"/>
        <end position="242"/>
    </location>
</feature>
<sequence>MGGRGMGISELKLPAAVKVHELADAKTLAATLAHDVAERLRAAIAAKGQACVVLSGGRSPVPFLEKLASEPLDWAKVTVSLADERWVPVEHADSNAGLLARHLLTGAAAKARFVGLYQQAENLDAAALKADQALTGLPPIDVLVLGMGDDGHTASLFPASPNLEAGLDLASTRRCLPLLAPSVPHQRLSMTRSLLASAAFIALSVQGPGKLATLRAALAGNDLTEMPIRAFLHDPLDIYWCP</sequence>